<comment type="function">
    <text evidence="1">Negative regulator of class I heat shock genes (grpE-dnaK-dnaJ and groELS operons). Prevents heat-shock induction of these operons.</text>
</comment>
<comment type="similarity">
    <text evidence="1">Belongs to the HrcA family.</text>
</comment>
<gene>
    <name evidence="1" type="primary">hrcA</name>
    <name type="ordered locus">Moth_0583</name>
</gene>
<keyword id="KW-0678">Repressor</keyword>
<keyword id="KW-0346">Stress response</keyword>
<keyword id="KW-0804">Transcription</keyword>
<keyword id="KW-0805">Transcription regulation</keyword>
<evidence type="ECO:0000255" key="1">
    <source>
        <dbReference type="HAMAP-Rule" id="MF_00081"/>
    </source>
</evidence>
<sequence>MRMDERKQKVLAAVIQDYILTGEPVGSRTIARRYNLGVSPATIRNEMADLEEMGLLEQPHTSAGRIPSDQGYRYYVDCLMPPAHLTPEEEEYVRRRYNQKMLEIEQVLAETTRLISEMTSYAAIALGPDQGRASLEEVQVLPIQVANKALLVAVTSTGVVEHRVLTIPEGVTPEDLNRISRVLNARLQGRALEDLRQMVLSDIYQELAQHRNLVNLVRDLLQQLLSLESGERVYRNGTLNILNQPEFKDLDRVREILSFLDQDEALRRIFMTTPSTGLTIRIGQENKIEGIDKCSVVTISYAVEGKIMGKVGLLGPTRMQYSRAISVLRCVADALSQTLEQLYR</sequence>
<proteinExistence type="inferred from homology"/>
<organism>
    <name type="scientific">Moorella thermoacetica (strain ATCC 39073 / JCM 9320)</name>
    <dbReference type="NCBI Taxonomy" id="264732"/>
    <lineage>
        <taxon>Bacteria</taxon>
        <taxon>Bacillati</taxon>
        <taxon>Bacillota</taxon>
        <taxon>Clostridia</taxon>
        <taxon>Moorellales</taxon>
        <taxon>Moorellaceae</taxon>
        <taxon>Moorella</taxon>
    </lineage>
</organism>
<accession>Q2RKX6</accession>
<name>HRCA_MOOTA</name>
<dbReference type="EMBL" id="CP000232">
    <property type="protein sequence ID" value="ABC18913.1"/>
    <property type="molecule type" value="Genomic_DNA"/>
</dbReference>
<dbReference type="RefSeq" id="YP_429456.1">
    <property type="nucleotide sequence ID" value="NC_007644.1"/>
</dbReference>
<dbReference type="SMR" id="Q2RKX6"/>
<dbReference type="STRING" id="264732.Moth_0583"/>
<dbReference type="EnsemblBacteria" id="ABC18913">
    <property type="protein sequence ID" value="ABC18913"/>
    <property type="gene ID" value="Moth_0583"/>
</dbReference>
<dbReference type="KEGG" id="mta:Moth_0583"/>
<dbReference type="PATRIC" id="fig|264732.11.peg.627"/>
<dbReference type="eggNOG" id="COG1420">
    <property type="taxonomic scope" value="Bacteria"/>
</dbReference>
<dbReference type="HOGENOM" id="CLU_050019_1_0_9"/>
<dbReference type="OrthoDB" id="9783139at2"/>
<dbReference type="GO" id="GO:0003677">
    <property type="term" value="F:DNA binding"/>
    <property type="evidence" value="ECO:0007669"/>
    <property type="project" value="InterPro"/>
</dbReference>
<dbReference type="GO" id="GO:0045892">
    <property type="term" value="P:negative regulation of DNA-templated transcription"/>
    <property type="evidence" value="ECO:0007669"/>
    <property type="project" value="UniProtKB-UniRule"/>
</dbReference>
<dbReference type="FunFam" id="1.10.10.10:FF:000049">
    <property type="entry name" value="Heat-inducible transcription repressor HrcA"/>
    <property type="match status" value="1"/>
</dbReference>
<dbReference type="Gene3D" id="3.30.450.40">
    <property type="match status" value="1"/>
</dbReference>
<dbReference type="Gene3D" id="3.30.390.60">
    <property type="entry name" value="Heat-inducible transcription repressor hrca homolog, domain 3"/>
    <property type="match status" value="1"/>
</dbReference>
<dbReference type="Gene3D" id="1.10.10.10">
    <property type="entry name" value="Winged helix-like DNA-binding domain superfamily/Winged helix DNA-binding domain"/>
    <property type="match status" value="1"/>
</dbReference>
<dbReference type="HAMAP" id="MF_00081">
    <property type="entry name" value="HrcA"/>
    <property type="match status" value="1"/>
</dbReference>
<dbReference type="InterPro" id="IPR029016">
    <property type="entry name" value="GAF-like_dom_sf"/>
</dbReference>
<dbReference type="InterPro" id="IPR002571">
    <property type="entry name" value="HrcA"/>
</dbReference>
<dbReference type="InterPro" id="IPR021153">
    <property type="entry name" value="HrcA_C"/>
</dbReference>
<dbReference type="InterPro" id="IPR036388">
    <property type="entry name" value="WH-like_DNA-bd_sf"/>
</dbReference>
<dbReference type="InterPro" id="IPR036390">
    <property type="entry name" value="WH_DNA-bd_sf"/>
</dbReference>
<dbReference type="InterPro" id="IPR023120">
    <property type="entry name" value="WHTH_transcript_rep_HrcA_IDD"/>
</dbReference>
<dbReference type="NCBIfam" id="TIGR00331">
    <property type="entry name" value="hrcA"/>
    <property type="match status" value="1"/>
</dbReference>
<dbReference type="PANTHER" id="PTHR34824">
    <property type="entry name" value="HEAT-INDUCIBLE TRANSCRIPTION REPRESSOR HRCA"/>
    <property type="match status" value="1"/>
</dbReference>
<dbReference type="PANTHER" id="PTHR34824:SF1">
    <property type="entry name" value="HEAT-INDUCIBLE TRANSCRIPTION REPRESSOR HRCA"/>
    <property type="match status" value="1"/>
</dbReference>
<dbReference type="Pfam" id="PF01628">
    <property type="entry name" value="HrcA"/>
    <property type="match status" value="1"/>
</dbReference>
<dbReference type="PIRSF" id="PIRSF005485">
    <property type="entry name" value="HrcA"/>
    <property type="match status" value="1"/>
</dbReference>
<dbReference type="SUPFAM" id="SSF55781">
    <property type="entry name" value="GAF domain-like"/>
    <property type="match status" value="1"/>
</dbReference>
<dbReference type="SUPFAM" id="SSF46785">
    <property type="entry name" value="Winged helix' DNA-binding domain"/>
    <property type="match status" value="1"/>
</dbReference>
<feature type="chain" id="PRO_1000010422" description="Heat-inducible transcription repressor HrcA">
    <location>
        <begin position="1"/>
        <end position="344"/>
    </location>
</feature>
<reference key="1">
    <citation type="journal article" date="2008" name="Environ. Microbiol.">
        <title>The complete genome sequence of Moorella thermoacetica (f. Clostridium thermoaceticum).</title>
        <authorList>
            <person name="Pierce E."/>
            <person name="Xie G."/>
            <person name="Barabote R.D."/>
            <person name="Saunders E."/>
            <person name="Han C.S."/>
            <person name="Detter J.C."/>
            <person name="Richardson P."/>
            <person name="Brettin T.S."/>
            <person name="Das A."/>
            <person name="Ljungdahl L.G."/>
            <person name="Ragsdale S.W."/>
        </authorList>
    </citation>
    <scope>NUCLEOTIDE SEQUENCE [LARGE SCALE GENOMIC DNA]</scope>
    <source>
        <strain>ATCC 39073 / JCM 9320</strain>
    </source>
</reference>
<protein>
    <recommendedName>
        <fullName evidence="1">Heat-inducible transcription repressor HrcA</fullName>
    </recommendedName>
</protein>